<name>YBEY_BURO1</name>
<accession>Q1BTS1</accession>
<gene>
    <name evidence="1" type="primary">ybeY</name>
    <name type="ordered locus">Bcen_2083</name>
</gene>
<keyword id="KW-0963">Cytoplasm</keyword>
<keyword id="KW-0255">Endonuclease</keyword>
<keyword id="KW-0378">Hydrolase</keyword>
<keyword id="KW-0479">Metal-binding</keyword>
<keyword id="KW-0540">Nuclease</keyword>
<keyword id="KW-0690">Ribosome biogenesis</keyword>
<keyword id="KW-0698">rRNA processing</keyword>
<keyword id="KW-0862">Zinc</keyword>
<evidence type="ECO:0000255" key="1">
    <source>
        <dbReference type="HAMAP-Rule" id="MF_00009"/>
    </source>
</evidence>
<evidence type="ECO:0000305" key="2"/>
<protein>
    <recommendedName>
        <fullName evidence="1">Endoribonuclease YbeY</fullName>
        <ecNumber evidence="1">3.1.-.-</ecNumber>
    </recommendedName>
</protein>
<organism>
    <name type="scientific">Burkholderia orbicola (strain AU 1054)</name>
    <dbReference type="NCBI Taxonomy" id="331271"/>
    <lineage>
        <taxon>Bacteria</taxon>
        <taxon>Pseudomonadati</taxon>
        <taxon>Pseudomonadota</taxon>
        <taxon>Betaproteobacteria</taxon>
        <taxon>Burkholderiales</taxon>
        <taxon>Burkholderiaceae</taxon>
        <taxon>Burkholderia</taxon>
        <taxon>Burkholderia cepacia complex</taxon>
        <taxon>Burkholderia orbicola</taxon>
    </lineage>
</organism>
<reference key="1">
    <citation type="submission" date="2006-05" db="EMBL/GenBank/DDBJ databases">
        <title>Complete sequence of chromosome 1 of Burkholderia cenocepacia AU 1054.</title>
        <authorList>
            <consortium name="US DOE Joint Genome Institute"/>
            <person name="Copeland A."/>
            <person name="Lucas S."/>
            <person name="Lapidus A."/>
            <person name="Barry K."/>
            <person name="Detter J.C."/>
            <person name="Glavina del Rio T."/>
            <person name="Hammon N."/>
            <person name="Israni S."/>
            <person name="Dalin E."/>
            <person name="Tice H."/>
            <person name="Pitluck S."/>
            <person name="Chain P."/>
            <person name="Malfatti S."/>
            <person name="Shin M."/>
            <person name="Vergez L."/>
            <person name="Schmutz J."/>
            <person name="Larimer F."/>
            <person name="Land M."/>
            <person name="Hauser L."/>
            <person name="Kyrpides N."/>
            <person name="Lykidis A."/>
            <person name="LiPuma J.J."/>
            <person name="Konstantinidis K."/>
            <person name="Tiedje J.M."/>
            <person name="Richardson P."/>
        </authorList>
    </citation>
    <scope>NUCLEOTIDE SEQUENCE [LARGE SCALE GENOMIC DNA]</scope>
    <source>
        <strain>AU 1054</strain>
    </source>
</reference>
<comment type="function">
    <text evidence="1">Single strand-specific metallo-endoribonuclease involved in late-stage 70S ribosome quality control and in maturation of the 3' terminus of the 16S rRNA.</text>
</comment>
<comment type="cofactor">
    <cofactor evidence="1">
        <name>Zn(2+)</name>
        <dbReference type="ChEBI" id="CHEBI:29105"/>
    </cofactor>
    <text evidence="1">Binds 1 zinc ion.</text>
</comment>
<comment type="subcellular location">
    <subcellularLocation>
        <location evidence="1">Cytoplasm</location>
    </subcellularLocation>
</comment>
<comment type="similarity">
    <text evidence="1">Belongs to the endoribonuclease YbeY family.</text>
</comment>
<comment type="sequence caution" evidence="2">
    <conflict type="erroneous initiation">
        <sequence resource="EMBL-CDS" id="ABF76984"/>
    </conflict>
</comment>
<feature type="chain" id="PRO_0000284172" description="Endoribonuclease YbeY">
    <location>
        <begin position="1"/>
        <end position="172"/>
    </location>
</feature>
<feature type="binding site" evidence="1">
    <location>
        <position position="134"/>
    </location>
    <ligand>
        <name>Zn(2+)</name>
        <dbReference type="ChEBI" id="CHEBI:29105"/>
        <note>catalytic</note>
    </ligand>
</feature>
<feature type="binding site" evidence="1">
    <location>
        <position position="138"/>
    </location>
    <ligand>
        <name>Zn(2+)</name>
        <dbReference type="ChEBI" id="CHEBI:29105"/>
        <note>catalytic</note>
    </ligand>
</feature>
<feature type="binding site" evidence="1">
    <location>
        <position position="144"/>
    </location>
    <ligand>
        <name>Zn(2+)</name>
        <dbReference type="ChEBI" id="CHEBI:29105"/>
        <note>catalytic</note>
    </ligand>
</feature>
<proteinExistence type="inferred from homology"/>
<sequence length="172" mass="19009">MTLHVGAEFAPREDDPEDEPRALELDLSVQYGDEITSDVRKTLPKRKLIAEWIEPALFASAQLTVRFVGENEGRTLNAGYRHKDYPTNVLTFAYDAAPDGTVIGDLVLCCPVVEKEAHDQGKPLAAHYAHLLVHGALHAQGYDHETSDEDAAEMEALEVDILAKLGFPNPYQ</sequence>
<dbReference type="EC" id="3.1.-.-" evidence="1"/>
<dbReference type="EMBL" id="CP000378">
    <property type="protein sequence ID" value="ABF76984.1"/>
    <property type="status" value="ALT_INIT"/>
    <property type="molecule type" value="Genomic_DNA"/>
</dbReference>
<dbReference type="SMR" id="Q1BTS1"/>
<dbReference type="HOGENOM" id="CLU_1118710_0_0_4"/>
<dbReference type="GO" id="GO:0005737">
    <property type="term" value="C:cytoplasm"/>
    <property type="evidence" value="ECO:0007669"/>
    <property type="project" value="UniProtKB-SubCell"/>
</dbReference>
<dbReference type="GO" id="GO:0004222">
    <property type="term" value="F:metalloendopeptidase activity"/>
    <property type="evidence" value="ECO:0007669"/>
    <property type="project" value="InterPro"/>
</dbReference>
<dbReference type="GO" id="GO:0004521">
    <property type="term" value="F:RNA endonuclease activity"/>
    <property type="evidence" value="ECO:0007669"/>
    <property type="project" value="UniProtKB-UniRule"/>
</dbReference>
<dbReference type="GO" id="GO:0008270">
    <property type="term" value="F:zinc ion binding"/>
    <property type="evidence" value="ECO:0007669"/>
    <property type="project" value="UniProtKB-UniRule"/>
</dbReference>
<dbReference type="GO" id="GO:0006364">
    <property type="term" value="P:rRNA processing"/>
    <property type="evidence" value="ECO:0007669"/>
    <property type="project" value="UniProtKB-UniRule"/>
</dbReference>
<dbReference type="Gene3D" id="3.40.390.30">
    <property type="entry name" value="Metalloproteases ('zincins'), catalytic domain"/>
    <property type="match status" value="1"/>
</dbReference>
<dbReference type="HAMAP" id="MF_00009">
    <property type="entry name" value="Endoribonucl_YbeY"/>
    <property type="match status" value="1"/>
</dbReference>
<dbReference type="InterPro" id="IPR023091">
    <property type="entry name" value="MetalPrtase_cat_dom_sf_prd"/>
</dbReference>
<dbReference type="InterPro" id="IPR002036">
    <property type="entry name" value="YbeY"/>
</dbReference>
<dbReference type="InterPro" id="IPR020549">
    <property type="entry name" value="YbeY_CS"/>
</dbReference>
<dbReference type="NCBIfam" id="NF010570">
    <property type="entry name" value="PRK13963.1"/>
    <property type="match status" value="1"/>
</dbReference>
<dbReference type="NCBIfam" id="TIGR00043">
    <property type="entry name" value="rRNA maturation RNase YbeY"/>
    <property type="match status" value="1"/>
</dbReference>
<dbReference type="PANTHER" id="PTHR46986">
    <property type="entry name" value="ENDORIBONUCLEASE YBEY, CHLOROPLASTIC"/>
    <property type="match status" value="1"/>
</dbReference>
<dbReference type="PANTHER" id="PTHR46986:SF1">
    <property type="entry name" value="ENDORIBONUCLEASE YBEY, CHLOROPLASTIC"/>
    <property type="match status" value="1"/>
</dbReference>
<dbReference type="Pfam" id="PF02130">
    <property type="entry name" value="YbeY"/>
    <property type="match status" value="1"/>
</dbReference>
<dbReference type="SUPFAM" id="SSF55486">
    <property type="entry name" value="Metalloproteases ('zincins'), catalytic domain"/>
    <property type="match status" value="1"/>
</dbReference>
<dbReference type="PROSITE" id="PS01306">
    <property type="entry name" value="UPF0054"/>
    <property type="match status" value="1"/>
</dbReference>